<gene>
    <name evidence="1" type="primary">mtnA</name>
    <name type="synonym">gcn3</name>
    <name type="ordered locus">XCV1671</name>
</gene>
<accession>Q3BV11</accession>
<organism>
    <name type="scientific">Xanthomonas euvesicatoria pv. vesicatoria (strain 85-10)</name>
    <name type="common">Xanthomonas campestris pv. vesicatoria</name>
    <dbReference type="NCBI Taxonomy" id="316273"/>
    <lineage>
        <taxon>Bacteria</taxon>
        <taxon>Pseudomonadati</taxon>
        <taxon>Pseudomonadota</taxon>
        <taxon>Gammaproteobacteria</taxon>
        <taxon>Lysobacterales</taxon>
        <taxon>Lysobacteraceae</taxon>
        <taxon>Xanthomonas</taxon>
    </lineage>
</organism>
<reference key="1">
    <citation type="journal article" date="2005" name="J. Bacteriol.">
        <title>Insights into genome plasticity and pathogenicity of the plant pathogenic Bacterium Xanthomonas campestris pv. vesicatoria revealed by the complete genome sequence.</title>
        <authorList>
            <person name="Thieme F."/>
            <person name="Koebnik R."/>
            <person name="Bekel T."/>
            <person name="Berger C."/>
            <person name="Boch J."/>
            <person name="Buettner D."/>
            <person name="Caldana C."/>
            <person name="Gaigalat L."/>
            <person name="Goesmann A."/>
            <person name="Kay S."/>
            <person name="Kirchner O."/>
            <person name="Lanz C."/>
            <person name="Linke B."/>
            <person name="McHardy A.C."/>
            <person name="Meyer F."/>
            <person name="Mittenhuber G."/>
            <person name="Nies D.H."/>
            <person name="Niesbach-Kloesgen U."/>
            <person name="Patschkowski T."/>
            <person name="Rueckert C."/>
            <person name="Rupp O."/>
            <person name="Schneiker S."/>
            <person name="Schuster S.C."/>
            <person name="Vorhoelter F.J."/>
            <person name="Weber E."/>
            <person name="Puehler A."/>
            <person name="Bonas U."/>
            <person name="Bartels D."/>
            <person name="Kaiser O."/>
        </authorList>
    </citation>
    <scope>NUCLEOTIDE SEQUENCE [LARGE SCALE GENOMIC DNA]</scope>
    <source>
        <strain>85-10</strain>
    </source>
</reference>
<name>MTNA_XANE5</name>
<proteinExistence type="inferred from homology"/>
<comment type="function">
    <text evidence="1">Catalyzes the interconversion of methylthioribose-1-phosphate (MTR-1-P) into methylthioribulose-1-phosphate (MTRu-1-P).</text>
</comment>
<comment type="catalytic activity">
    <reaction evidence="1">
        <text>5-(methylsulfanyl)-alpha-D-ribose 1-phosphate = 5-(methylsulfanyl)-D-ribulose 1-phosphate</text>
        <dbReference type="Rhea" id="RHEA:19989"/>
        <dbReference type="ChEBI" id="CHEBI:58533"/>
        <dbReference type="ChEBI" id="CHEBI:58548"/>
        <dbReference type="EC" id="5.3.1.23"/>
    </reaction>
</comment>
<comment type="pathway">
    <text evidence="1">Amino-acid biosynthesis; L-methionine biosynthesis via salvage pathway; L-methionine from S-methyl-5-thio-alpha-D-ribose 1-phosphate: step 1/6.</text>
</comment>
<comment type="similarity">
    <text evidence="2">Belongs to the eIF-2B alpha/beta/delta subunits family. MtnA subfamily.</text>
</comment>
<keyword id="KW-0028">Amino-acid biosynthesis</keyword>
<keyword id="KW-0413">Isomerase</keyword>
<keyword id="KW-0486">Methionine biosynthesis</keyword>
<sequence length="354" mass="37230">MNDSAHIDYARYDHIRPLLWTGDALELLDQRKLPFEVAHVRCDSSDAVAEAIHSLAVRGAPAIGIAAGWGVVLAARDIAADDGSAALQKLEPALLRLNAARPTAVNLAWALMRMRRVLGAAGADWREVIAREAQAIADEDLAANRHMGALGAALIAPGSGVLTHCNTGSLATAGFGTALGVIRAGMAQQRIAKVFAGETRPWLQGARLTVWELQQDGIDATLIADSAASHLMKSGLVQWVIVGADRICANGDTANKIGTYQLAIAARHHGVKFMVVAPSSTVDMATASGDQIEIEQRDPGELFGVGGVRTVADGIHAWNPVFDVTPGDLIDAIVTERGVIAQPDLARMQAAFGA</sequence>
<evidence type="ECO:0000255" key="1">
    <source>
        <dbReference type="HAMAP-Rule" id="MF_01678"/>
    </source>
</evidence>
<evidence type="ECO:0000305" key="2"/>
<feature type="chain" id="PRO_0000357271" description="Methylthioribose-1-phosphate isomerase">
    <location>
        <begin position="1"/>
        <end position="354"/>
    </location>
</feature>
<feature type="active site" description="Proton donor" evidence="1">
    <location>
        <position position="245"/>
    </location>
</feature>
<feature type="binding site" evidence="1">
    <location>
        <begin position="58"/>
        <end position="60"/>
    </location>
    <ligand>
        <name>substrate</name>
    </ligand>
</feature>
<feature type="binding site" evidence="1">
    <location>
        <position position="101"/>
    </location>
    <ligand>
        <name>substrate</name>
    </ligand>
</feature>
<feature type="binding site" evidence="1">
    <location>
        <position position="204"/>
    </location>
    <ligand>
        <name>substrate</name>
    </ligand>
</feature>
<feature type="binding site" evidence="1">
    <location>
        <begin position="255"/>
        <end position="256"/>
    </location>
    <ligand>
        <name>substrate</name>
    </ligand>
</feature>
<feature type="site" description="Transition state stabilizer" evidence="1">
    <location>
        <position position="165"/>
    </location>
</feature>
<dbReference type="EC" id="5.3.1.23" evidence="1"/>
<dbReference type="EMBL" id="AM039952">
    <property type="protein sequence ID" value="CAJ23348.1"/>
    <property type="molecule type" value="Genomic_DNA"/>
</dbReference>
<dbReference type="RefSeq" id="WP_011347031.1">
    <property type="nucleotide sequence ID" value="NZ_CP017190.1"/>
</dbReference>
<dbReference type="SMR" id="Q3BV11"/>
<dbReference type="STRING" id="456327.BJD11_14220"/>
<dbReference type="GeneID" id="97510011"/>
<dbReference type="KEGG" id="xcv:XCV1671"/>
<dbReference type="eggNOG" id="COG0182">
    <property type="taxonomic scope" value="Bacteria"/>
</dbReference>
<dbReference type="HOGENOM" id="CLU_016218_1_2_6"/>
<dbReference type="UniPathway" id="UPA00904">
    <property type="reaction ID" value="UER00874"/>
</dbReference>
<dbReference type="Proteomes" id="UP000007069">
    <property type="component" value="Chromosome"/>
</dbReference>
<dbReference type="GO" id="GO:0046523">
    <property type="term" value="F:S-methyl-5-thioribose-1-phosphate isomerase activity"/>
    <property type="evidence" value="ECO:0007669"/>
    <property type="project" value="UniProtKB-UniRule"/>
</dbReference>
<dbReference type="GO" id="GO:0019509">
    <property type="term" value="P:L-methionine salvage from methylthioadenosine"/>
    <property type="evidence" value="ECO:0007669"/>
    <property type="project" value="UniProtKB-UniRule"/>
</dbReference>
<dbReference type="FunFam" id="1.20.120.420:FF:000007">
    <property type="entry name" value="Methylthioribose-1-phosphate isomerase"/>
    <property type="match status" value="1"/>
</dbReference>
<dbReference type="FunFam" id="3.40.50.10470:FF:000006">
    <property type="entry name" value="Methylthioribose-1-phosphate isomerase"/>
    <property type="match status" value="1"/>
</dbReference>
<dbReference type="Gene3D" id="1.20.120.420">
    <property type="entry name" value="translation initiation factor eif-2b, domain 1"/>
    <property type="match status" value="1"/>
</dbReference>
<dbReference type="Gene3D" id="3.40.50.10470">
    <property type="entry name" value="Translation initiation factor eif-2b, domain 2"/>
    <property type="match status" value="1"/>
</dbReference>
<dbReference type="HAMAP" id="MF_01678">
    <property type="entry name" value="Salvage_MtnA"/>
    <property type="match status" value="1"/>
</dbReference>
<dbReference type="InterPro" id="IPR000649">
    <property type="entry name" value="IF-2B-related"/>
</dbReference>
<dbReference type="InterPro" id="IPR005251">
    <property type="entry name" value="IF-M1Pi"/>
</dbReference>
<dbReference type="InterPro" id="IPR042529">
    <property type="entry name" value="IF_2B-like_C"/>
</dbReference>
<dbReference type="InterPro" id="IPR011559">
    <property type="entry name" value="Initiation_fac_2B_a/b/d"/>
</dbReference>
<dbReference type="InterPro" id="IPR027363">
    <property type="entry name" value="M1Pi_N"/>
</dbReference>
<dbReference type="InterPro" id="IPR037171">
    <property type="entry name" value="NagB/RpiA_transferase-like"/>
</dbReference>
<dbReference type="NCBIfam" id="TIGR00524">
    <property type="entry name" value="eIF-2B_rel"/>
    <property type="match status" value="1"/>
</dbReference>
<dbReference type="NCBIfam" id="NF004326">
    <property type="entry name" value="PRK05720.1"/>
    <property type="match status" value="1"/>
</dbReference>
<dbReference type="NCBIfam" id="TIGR00512">
    <property type="entry name" value="salvage_mtnA"/>
    <property type="match status" value="1"/>
</dbReference>
<dbReference type="PANTHER" id="PTHR43475">
    <property type="entry name" value="METHYLTHIORIBOSE-1-PHOSPHATE ISOMERASE"/>
    <property type="match status" value="1"/>
</dbReference>
<dbReference type="PANTHER" id="PTHR43475:SF1">
    <property type="entry name" value="METHYLTHIORIBOSE-1-PHOSPHATE ISOMERASE"/>
    <property type="match status" value="1"/>
</dbReference>
<dbReference type="Pfam" id="PF01008">
    <property type="entry name" value="IF-2B"/>
    <property type="match status" value="1"/>
</dbReference>
<dbReference type="SUPFAM" id="SSF100950">
    <property type="entry name" value="NagB/RpiA/CoA transferase-like"/>
    <property type="match status" value="1"/>
</dbReference>
<protein>
    <recommendedName>
        <fullName evidence="1">Methylthioribose-1-phosphate isomerase</fullName>
        <shortName evidence="1">M1Pi</shortName>
        <shortName evidence="1">MTR-1-P isomerase</shortName>
        <ecNumber evidence="1">5.3.1.23</ecNumber>
    </recommendedName>
    <alternativeName>
        <fullName evidence="1">S-methyl-5-thioribose-1-phosphate isomerase</fullName>
    </alternativeName>
</protein>